<name>PTH_HAEIN</name>
<reference key="1">
    <citation type="journal article" date="1995" name="Science">
        <title>Whole-genome random sequencing and assembly of Haemophilus influenzae Rd.</title>
        <authorList>
            <person name="Fleischmann R.D."/>
            <person name="Adams M.D."/>
            <person name="White O."/>
            <person name="Clayton R.A."/>
            <person name="Kirkness E.F."/>
            <person name="Kerlavage A.R."/>
            <person name="Bult C.J."/>
            <person name="Tomb J.-F."/>
            <person name="Dougherty B.A."/>
            <person name="Merrick J.M."/>
            <person name="McKenney K."/>
            <person name="Sutton G.G."/>
            <person name="FitzHugh W."/>
            <person name="Fields C.A."/>
            <person name="Gocayne J.D."/>
            <person name="Scott J.D."/>
            <person name="Shirley R."/>
            <person name="Liu L.-I."/>
            <person name="Glodek A."/>
            <person name="Kelley J.M."/>
            <person name="Weidman J.F."/>
            <person name="Phillips C.A."/>
            <person name="Spriggs T."/>
            <person name="Hedblom E."/>
            <person name="Cotton M.D."/>
            <person name="Utterback T.R."/>
            <person name="Hanna M.C."/>
            <person name="Nguyen D.T."/>
            <person name="Saudek D.M."/>
            <person name="Brandon R.C."/>
            <person name="Fine L.D."/>
            <person name="Fritchman J.L."/>
            <person name="Fuhrmann J.L."/>
            <person name="Geoghagen N.S.M."/>
            <person name="Gnehm C.L."/>
            <person name="McDonald L.A."/>
            <person name="Small K.V."/>
            <person name="Fraser C.M."/>
            <person name="Smith H.O."/>
            <person name="Venter J.C."/>
        </authorList>
    </citation>
    <scope>NUCLEOTIDE SEQUENCE [LARGE SCALE GENOMIC DNA]</scope>
    <source>
        <strain>ATCC 51907 / DSM 11121 / KW20 / Rd</strain>
    </source>
</reference>
<keyword id="KW-0963">Cytoplasm</keyword>
<keyword id="KW-0378">Hydrolase</keyword>
<keyword id="KW-1185">Reference proteome</keyword>
<keyword id="KW-0694">RNA-binding</keyword>
<keyword id="KW-0820">tRNA-binding</keyword>
<evidence type="ECO:0000255" key="1">
    <source>
        <dbReference type="HAMAP-Rule" id="MF_00083"/>
    </source>
</evidence>
<protein>
    <recommendedName>
        <fullName evidence="1">Peptidyl-tRNA hydrolase</fullName>
        <shortName evidence="1">Pth</shortName>
        <ecNumber evidence="1">3.1.1.29</ecNumber>
    </recommendedName>
</protein>
<comment type="function">
    <text evidence="1">Hydrolyzes ribosome-free peptidyl-tRNAs (with 1 or more amino acids incorporated), which drop off the ribosome during protein synthesis, or as a result of ribosome stalling.</text>
</comment>
<comment type="function">
    <text evidence="1">Catalyzes the release of premature peptidyl moieties from peptidyl-tRNA molecules trapped in stalled 50S ribosomal subunits, and thus maintains levels of free tRNAs and 50S ribosomes.</text>
</comment>
<comment type="catalytic activity">
    <reaction evidence="1">
        <text>an N-acyl-L-alpha-aminoacyl-tRNA + H2O = an N-acyl-L-amino acid + a tRNA + H(+)</text>
        <dbReference type="Rhea" id="RHEA:54448"/>
        <dbReference type="Rhea" id="RHEA-COMP:10123"/>
        <dbReference type="Rhea" id="RHEA-COMP:13883"/>
        <dbReference type="ChEBI" id="CHEBI:15377"/>
        <dbReference type="ChEBI" id="CHEBI:15378"/>
        <dbReference type="ChEBI" id="CHEBI:59874"/>
        <dbReference type="ChEBI" id="CHEBI:78442"/>
        <dbReference type="ChEBI" id="CHEBI:138191"/>
        <dbReference type="EC" id="3.1.1.29"/>
    </reaction>
</comment>
<comment type="subunit">
    <text evidence="1">Monomer.</text>
</comment>
<comment type="subcellular location">
    <subcellularLocation>
        <location evidence="1">Cytoplasm</location>
    </subcellularLocation>
</comment>
<comment type="similarity">
    <text evidence="1">Belongs to the PTH family.</text>
</comment>
<feature type="chain" id="PRO_0000187747" description="Peptidyl-tRNA hydrolase">
    <location>
        <begin position="1"/>
        <end position="194"/>
    </location>
</feature>
<feature type="active site" description="Proton acceptor" evidence="1">
    <location>
        <position position="22"/>
    </location>
</feature>
<feature type="binding site" evidence="1">
    <location>
        <position position="17"/>
    </location>
    <ligand>
        <name>tRNA</name>
        <dbReference type="ChEBI" id="CHEBI:17843"/>
    </ligand>
</feature>
<feature type="binding site" evidence="1">
    <location>
        <position position="68"/>
    </location>
    <ligand>
        <name>tRNA</name>
        <dbReference type="ChEBI" id="CHEBI:17843"/>
    </ligand>
</feature>
<feature type="binding site" evidence="1">
    <location>
        <position position="70"/>
    </location>
    <ligand>
        <name>tRNA</name>
        <dbReference type="ChEBI" id="CHEBI:17843"/>
    </ligand>
</feature>
<feature type="binding site" evidence="1">
    <location>
        <position position="116"/>
    </location>
    <ligand>
        <name>tRNA</name>
        <dbReference type="ChEBI" id="CHEBI:17843"/>
    </ligand>
</feature>
<feature type="site" description="Discriminates between blocked and unblocked aminoacyl-tRNA" evidence="1">
    <location>
        <position position="12"/>
    </location>
</feature>
<feature type="site" description="Stabilizes the basic form of H active site to accept a proton" evidence="1">
    <location>
        <position position="95"/>
    </location>
</feature>
<gene>
    <name evidence="1" type="primary">pth</name>
    <name type="ordered locus">HI_0394</name>
</gene>
<organism>
    <name type="scientific">Haemophilus influenzae (strain ATCC 51907 / DSM 11121 / KW20 / Rd)</name>
    <dbReference type="NCBI Taxonomy" id="71421"/>
    <lineage>
        <taxon>Bacteria</taxon>
        <taxon>Pseudomonadati</taxon>
        <taxon>Pseudomonadota</taxon>
        <taxon>Gammaproteobacteria</taxon>
        <taxon>Pasteurellales</taxon>
        <taxon>Pasteurellaceae</taxon>
        <taxon>Haemophilus</taxon>
    </lineage>
</organism>
<proteinExistence type="inferred from homology"/>
<accession>P44682</accession>
<sequence>MSEIKLIVGLGNPGDKYTDTRHNAGEWLIERLARRFNVSLNPESKFFGKTARTLVNGKEVRLLVPTTFMNLSGKAVGALASFYRIKPEEILVIHDELDLPPGTAKLKQGGGHGGHNGLKDIVAQLGNNNNFYRLRIGIGHPGHRDLVAGYVLNKPSPADRDALEKVLDEATDCVEMIFRDGMVKATNRLNSFKI</sequence>
<dbReference type="EC" id="3.1.1.29" evidence="1"/>
<dbReference type="EMBL" id="L42023">
    <property type="protein sequence ID" value="AAC22053.1"/>
    <property type="molecule type" value="Genomic_DNA"/>
</dbReference>
<dbReference type="PIR" id="C64065">
    <property type="entry name" value="C64065"/>
</dbReference>
<dbReference type="RefSeq" id="NP_438556.1">
    <property type="nucleotide sequence ID" value="NC_000907.1"/>
</dbReference>
<dbReference type="SMR" id="P44682"/>
<dbReference type="STRING" id="71421.HI_0394"/>
<dbReference type="EnsemblBacteria" id="AAC22053">
    <property type="protein sequence ID" value="AAC22053"/>
    <property type="gene ID" value="HI_0394"/>
</dbReference>
<dbReference type="KEGG" id="hin:HI_0394"/>
<dbReference type="PATRIC" id="fig|71421.8.peg.413"/>
<dbReference type="eggNOG" id="COG0193">
    <property type="taxonomic scope" value="Bacteria"/>
</dbReference>
<dbReference type="HOGENOM" id="CLU_062456_3_1_6"/>
<dbReference type="OrthoDB" id="9800507at2"/>
<dbReference type="PhylomeDB" id="P44682"/>
<dbReference type="BioCyc" id="HINF71421:G1GJ1-409-MONOMER"/>
<dbReference type="Proteomes" id="UP000000579">
    <property type="component" value="Chromosome"/>
</dbReference>
<dbReference type="GO" id="GO:0005737">
    <property type="term" value="C:cytoplasm"/>
    <property type="evidence" value="ECO:0007669"/>
    <property type="project" value="UniProtKB-SubCell"/>
</dbReference>
<dbReference type="GO" id="GO:0004045">
    <property type="term" value="F:peptidyl-tRNA hydrolase activity"/>
    <property type="evidence" value="ECO:0000318"/>
    <property type="project" value="GO_Central"/>
</dbReference>
<dbReference type="GO" id="GO:0000049">
    <property type="term" value="F:tRNA binding"/>
    <property type="evidence" value="ECO:0007669"/>
    <property type="project" value="UniProtKB-UniRule"/>
</dbReference>
<dbReference type="GO" id="GO:0006515">
    <property type="term" value="P:protein quality control for misfolded or incompletely synthesized proteins"/>
    <property type="evidence" value="ECO:0007669"/>
    <property type="project" value="UniProtKB-UniRule"/>
</dbReference>
<dbReference type="GO" id="GO:0072344">
    <property type="term" value="P:rescue of stalled ribosome"/>
    <property type="evidence" value="ECO:0007669"/>
    <property type="project" value="UniProtKB-UniRule"/>
</dbReference>
<dbReference type="CDD" id="cd00462">
    <property type="entry name" value="PTH"/>
    <property type="match status" value="1"/>
</dbReference>
<dbReference type="FunFam" id="3.40.50.1470:FF:000001">
    <property type="entry name" value="Peptidyl-tRNA hydrolase"/>
    <property type="match status" value="1"/>
</dbReference>
<dbReference type="Gene3D" id="3.40.50.1470">
    <property type="entry name" value="Peptidyl-tRNA hydrolase"/>
    <property type="match status" value="1"/>
</dbReference>
<dbReference type="HAMAP" id="MF_00083">
    <property type="entry name" value="Pept_tRNA_hydro_bact"/>
    <property type="match status" value="1"/>
</dbReference>
<dbReference type="InterPro" id="IPR001328">
    <property type="entry name" value="Pept_tRNA_hydro"/>
</dbReference>
<dbReference type="InterPro" id="IPR018171">
    <property type="entry name" value="Pept_tRNA_hydro_CS"/>
</dbReference>
<dbReference type="InterPro" id="IPR036416">
    <property type="entry name" value="Pept_tRNA_hydro_sf"/>
</dbReference>
<dbReference type="NCBIfam" id="TIGR00447">
    <property type="entry name" value="pth"/>
    <property type="match status" value="1"/>
</dbReference>
<dbReference type="PANTHER" id="PTHR17224">
    <property type="entry name" value="PEPTIDYL-TRNA HYDROLASE"/>
    <property type="match status" value="1"/>
</dbReference>
<dbReference type="PANTHER" id="PTHR17224:SF1">
    <property type="entry name" value="PEPTIDYL-TRNA HYDROLASE"/>
    <property type="match status" value="1"/>
</dbReference>
<dbReference type="Pfam" id="PF01195">
    <property type="entry name" value="Pept_tRNA_hydro"/>
    <property type="match status" value="1"/>
</dbReference>
<dbReference type="SUPFAM" id="SSF53178">
    <property type="entry name" value="Peptidyl-tRNA hydrolase-like"/>
    <property type="match status" value="1"/>
</dbReference>
<dbReference type="PROSITE" id="PS01195">
    <property type="entry name" value="PEPT_TRNA_HYDROL_1"/>
    <property type="match status" value="1"/>
</dbReference>
<dbReference type="PROSITE" id="PS01196">
    <property type="entry name" value="PEPT_TRNA_HYDROL_2"/>
    <property type="match status" value="1"/>
</dbReference>